<evidence type="ECO:0000255" key="1"/>
<evidence type="ECO:0000269" key="2">
    <source>
    </source>
</evidence>
<evidence type="ECO:0000269" key="3">
    <source>
    </source>
</evidence>
<evidence type="ECO:0000269" key="4">
    <source>
    </source>
</evidence>
<evidence type="ECO:0000303" key="5">
    <source>
    </source>
</evidence>
<evidence type="ECO:0000303" key="6">
    <source>
    </source>
</evidence>
<evidence type="ECO:0000305" key="7"/>
<evidence type="ECO:0000312" key="8">
    <source>
        <dbReference type="EMBL" id="CBH21499.1"/>
    </source>
</evidence>
<evidence type="ECO:0007829" key="9">
    <source>
        <dbReference type="PDB" id="1XRS"/>
    </source>
</evidence>
<dbReference type="EC" id="5.4.3.3" evidence="2 3"/>
<dbReference type="EMBL" id="AF104259">
    <property type="protein sequence ID" value="AAC79717.1"/>
    <property type="molecule type" value="Genomic_DNA"/>
</dbReference>
<dbReference type="EMBL" id="FP565809">
    <property type="protein sequence ID" value="CBH21499.1"/>
    <property type="status" value="ALT_INIT"/>
    <property type="molecule type" value="Genomic_DNA"/>
</dbReference>
<dbReference type="PDB" id="1XRS">
    <property type="method" value="X-ray"/>
    <property type="resolution" value="2.80 A"/>
    <property type="chains" value="A=5-519"/>
</dbReference>
<dbReference type="PDBsum" id="1XRS"/>
<dbReference type="SMR" id="E3PRJ5"/>
<dbReference type="IntAct" id="E3PRJ5">
    <property type="interactions" value="1"/>
</dbReference>
<dbReference type="STRING" id="1511.CLOST_1379"/>
<dbReference type="KEGG" id="cst:CLOST_1379"/>
<dbReference type="eggNOG" id="COG0274">
    <property type="taxonomic scope" value="Bacteria"/>
</dbReference>
<dbReference type="HOGENOM" id="CLU_517447_0_0_9"/>
<dbReference type="BRENDA" id="5.4.3.3">
    <property type="organism ID" value="1522"/>
</dbReference>
<dbReference type="SABIO-RK" id="E3PRJ5"/>
<dbReference type="UniPathway" id="UPA00225"/>
<dbReference type="EvolutionaryTrace" id="E3PRJ5"/>
<dbReference type="Proteomes" id="UP000007041">
    <property type="component" value="Chromosome"/>
</dbReference>
<dbReference type="GO" id="GO:0031419">
    <property type="term" value="F:cobalamin binding"/>
    <property type="evidence" value="ECO:0007669"/>
    <property type="project" value="UniProtKB-KW"/>
</dbReference>
<dbReference type="GO" id="GO:0047826">
    <property type="term" value="F:D-lysine 5,6-aminomutase activity"/>
    <property type="evidence" value="ECO:0007669"/>
    <property type="project" value="UniProtKB-EC"/>
</dbReference>
<dbReference type="Gene3D" id="3.20.20.440">
    <property type="entry name" value="D-Lysine 5,6-aminomutase alpha subunit"/>
    <property type="match status" value="1"/>
</dbReference>
<dbReference type="InterPro" id="IPR016176">
    <property type="entry name" value="Cbl-dep_enz_cat"/>
</dbReference>
<dbReference type="InterPro" id="IPR015130">
    <property type="entry name" value="Lys-AminoMut_A"/>
</dbReference>
<dbReference type="InterPro" id="IPR037086">
    <property type="entry name" value="Lys-AminoMut_asu_sf"/>
</dbReference>
<dbReference type="Pfam" id="PF09043">
    <property type="entry name" value="Lys-AminoMut_A"/>
    <property type="match status" value="1"/>
</dbReference>
<dbReference type="SUPFAM" id="SSF51703">
    <property type="entry name" value="Cobalamin (vitamin B12)-dependent enzymes"/>
    <property type="match status" value="1"/>
</dbReference>
<reference key="1">
    <citation type="journal article" date="2000" name="J. Biol. Chem.">
        <title>Cloning, sequencing, heterologous expression, purification, and characterization of adenosylcobalamin-dependent D-lysine 5, 6-aminomutase from Clostridium sticklandii.</title>
        <authorList>
            <person name="Chang C.H."/>
            <person name="Frey P.A."/>
        </authorList>
    </citation>
    <scope>NUCLEOTIDE SEQUENCE [GENOMIC DNA]</scope>
    <scope>PROTEIN SEQUENCE OF N-TERMINUS</scope>
    <scope>FUNCTION</scope>
    <scope>CATALYTIC ACTIVITY</scope>
    <scope>COFACTOR</scope>
    <scope>ACTIVITY REGULATION</scope>
    <scope>BIOPHYSICOCHEMICAL PROPERTIES</scope>
    <scope>EPR SPECTROSCOPY</scope>
    <scope>PATHWAY</scope>
</reference>
<reference key="2">
    <citation type="journal article" date="2010" name="BMC Genomics">
        <title>Clostridium sticklandii, a specialist in amino acid degradation:revisiting its metabolism through its genome sequence.</title>
        <authorList>
            <person name="Fonknechten N."/>
            <person name="Chaussonnerie S."/>
            <person name="Tricot S."/>
            <person name="Lajus A."/>
            <person name="Andreesen J.R."/>
            <person name="Perchat N."/>
            <person name="Pelletier E."/>
            <person name="Gouyvenoux M."/>
            <person name="Barbe V."/>
            <person name="Salanoubat M."/>
            <person name="Le Paslier D."/>
            <person name="Weissenbach J."/>
            <person name="Cohen G.N."/>
            <person name="Kreimeyer A."/>
        </authorList>
    </citation>
    <scope>NUCLEOTIDE SEQUENCE [LARGE SCALE GENOMIC DNA]</scope>
    <source>
        <strain>ATCC 12662 / DSM 519 / JCM 1433 / CCUG 9281 / NCIMB 10654 / HF</strain>
    </source>
</reference>
<reference key="3">
    <citation type="journal article" date="2001" name="Biochemistry">
        <title>Electron transfer in the substrate-dependent suicide inactivation of lysine 5,6-aminomutase.</title>
        <authorList>
            <person name="Tang K.H."/>
            <person name="Chang C.H."/>
            <person name="Frey P.A."/>
        </authorList>
    </citation>
    <scope>FUNCTION</scope>
    <scope>CATALYTIC ACTIVITY</scope>
    <scope>COFACTOR</scope>
    <scope>REACTION MECHANISM</scope>
</reference>
<reference key="4">
    <citation type="journal article" date="2004" name="Proc. Natl. Acad. Sci. U.S.A.">
        <title>A locking mechanism preventing radical damage in the absence of substrate, as revealed by the x-ray structure of lysine 5,6-aminomutase.</title>
        <authorList>
            <person name="Berkovitch F."/>
            <person name="Behshad E."/>
            <person name="Tang K.H."/>
            <person name="Enns E.A."/>
            <person name="Frey P.A."/>
            <person name="Drennan C.L."/>
        </authorList>
    </citation>
    <scope>X-RAY CRYSTALLOGRAPHY (2.80 ANGSTROMS) IN COMPLEX WITH B12 AND PYRIDOXAL PHOSPHATE</scope>
    <scope>COFACTOR</scope>
    <scope>SUBUNIT</scope>
</reference>
<proteinExistence type="evidence at protein level"/>
<feature type="chain" id="PRO_0000416982" description="Lysine 5,6-aminomutase alpha subunit">
    <location>
        <begin position="1"/>
        <end position="519"/>
    </location>
</feature>
<feature type="binding site" evidence="4">
    <location>
        <begin position="57"/>
        <end position="59"/>
    </location>
    <ligand>
        <name>adenosylcob(III)alamin</name>
        <dbReference type="ChEBI" id="CHEBI:18408"/>
    </ligand>
</feature>
<feature type="binding site" evidence="4">
    <location>
        <begin position="187"/>
        <end position="192"/>
    </location>
    <ligand>
        <name>pyridoxal 5'-phosphate</name>
        <dbReference type="ChEBI" id="CHEBI:597326"/>
    </ligand>
</feature>
<feature type="binding site" evidence="4">
    <location>
        <position position="241"/>
    </location>
    <ligand>
        <name>pyridoxal 5'-phosphate</name>
        <dbReference type="ChEBI" id="CHEBI:597326"/>
    </ligand>
</feature>
<feature type="binding site" evidence="4">
    <location>
        <position position="266"/>
    </location>
    <ligand>
        <name>pyridoxal 5'-phosphate</name>
        <dbReference type="ChEBI" id="CHEBI:597326"/>
    </ligand>
</feature>
<feature type="binding site" evidence="4">
    <location>
        <position position="271"/>
    </location>
    <ligand>
        <name>pyridoxal 5'-phosphate</name>
        <dbReference type="ChEBI" id="CHEBI:597326"/>
    </ligand>
</feature>
<feature type="binding site" evidence="4">
    <location>
        <position position="302"/>
    </location>
    <ligand>
        <name>pyridoxal 5'-phosphate</name>
        <dbReference type="ChEBI" id="CHEBI:597326"/>
    </ligand>
</feature>
<feature type="sequence conflict" description="In Ref. 1; AAC79717." evidence="7" ref="1">
    <original>V</original>
    <variation>M</variation>
    <location>
        <position position="4"/>
    </location>
</feature>
<feature type="helix" evidence="9">
    <location>
        <begin position="12"/>
        <end position="34"/>
    </location>
</feature>
<feature type="strand" evidence="9">
    <location>
        <begin position="36"/>
        <end position="38"/>
    </location>
</feature>
<feature type="helix" evidence="9">
    <location>
        <begin position="39"/>
        <end position="48"/>
    </location>
</feature>
<feature type="helix" evidence="9">
    <location>
        <begin position="61"/>
        <end position="71"/>
    </location>
</feature>
<feature type="turn" evidence="9">
    <location>
        <begin position="75"/>
        <end position="77"/>
    </location>
</feature>
<feature type="helix" evidence="9">
    <location>
        <begin position="79"/>
        <end position="88"/>
    </location>
</feature>
<feature type="helix" evidence="9">
    <location>
        <begin position="94"/>
        <end position="103"/>
    </location>
</feature>
<feature type="turn" evidence="9">
    <location>
        <begin position="108"/>
        <end position="110"/>
    </location>
</feature>
<feature type="helix" evidence="9">
    <location>
        <begin position="116"/>
        <end position="148"/>
    </location>
</feature>
<feature type="strand" evidence="9">
    <location>
        <begin position="155"/>
        <end position="160"/>
    </location>
</feature>
<feature type="helix" evidence="9">
    <location>
        <begin position="165"/>
        <end position="177"/>
    </location>
</feature>
<feature type="strand" evidence="9">
    <location>
        <begin position="181"/>
        <end position="185"/>
    </location>
</feature>
<feature type="helix" evidence="9">
    <location>
        <begin position="191"/>
        <end position="193"/>
    </location>
</feature>
<feature type="helix" evidence="9">
    <location>
        <begin position="213"/>
        <end position="230"/>
    </location>
</feature>
<feature type="strand" evidence="9">
    <location>
        <begin position="235"/>
        <end position="239"/>
    </location>
</feature>
<feature type="helix" evidence="9">
    <location>
        <begin position="245"/>
        <end position="255"/>
    </location>
</feature>
<feature type="strand" evidence="9">
    <location>
        <begin position="258"/>
        <end position="261"/>
    </location>
</feature>
<feature type="helix" evidence="9">
    <location>
        <begin position="266"/>
        <end position="271"/>
    </location>
</feature>
<feature type="helix" evidence="9">
    <location>
        <begin position="275"/>
        <end position="291"/>
    </location>
</feature>
<feature type="strand" evidence="9">
    <location>
        <begin position="295"/>
        <end position="297"/>
    </location>
</feature>
<feature type="helix" evidence="9">
    <location>
        <begin position="301"/>
        <end position="304"/>
    </location>
</feature>
<feature type="strand" evidence="9">
    <location>
        <begin position="305"/>
        <end position="307"/>
    </location>
</feature>
<feature type="turn" evidence="9">
    <location>
        <begin position="309"/>
        <end position="311"/>
    </location>
</feature>
<feature type="helix" evidence="9">
    <location>
        <begin position="313"/>
        <end position="329"/>
    </location>
</feature>
<feature type="helix" evidence="9">
    <location>
        <begin position="334"/>
        <end position="336"/>
    </location>
</feature>
<feature type="strand" evidence="9">
    <location>
        <begin position="340"/>
        <end position="342"/>
    </location>
</feature>
<feature type="helix" evidence="9">
    <location>
        <begin position="352"/>
        <end position="366"/>
    </location>
</feature>
<feature type="strand" evidence="9">
    <location>
        <begin position="373"/>
        <end position="375"/>
    </location>
</feature>
<feature type="helix" evidence="9">
    <location>
        <begin position="385"/>
        <end position="402"/>
    </location>
</feature>
<feature type="strand" evidence="9">
    <location>
        <begin position="405"/>
        <end position="408"/>
    </location>
</feature>
<feature type="turn" evidence="9">
    <location>
        <begin position="412"/>
        <end position="416"/>
    </location>
</feature>
<feature type="helix" evidence="9">
    <location>
        <begin position="421"/>
        <end position="437"/>
    </location>
</feature>
<feature type="turn" evidence="9">
    <location>
        <begin position="438"/>
        <end position="440"/>
    </location>
</feature>
<feature type="helix" evidence="9">
    <location>
        <begin position="441"/>
        <end position="444"/>
    </location>
</feature>
<feature type="helix" evidence="9">
    <location>
        <begin position="452"/>
        <end position="481"/>
    </location>
</feature>
<feature type="turn" evidence="9">
    <location>
        <begin position="482"/>
        <end position="487"/>
    </location>
</feature>
<feature type="helix" evidence="9">
    <location>
        <begin position="498"/>
        <end position="500"/>
    </location>
</feature>
<feature type="strand" evidence="9">
    <location>
        <begin position="501"/>
        <end position="503"/>
    </location>
</feature>
<feature type="helix" evidence="9">
    <location>
        <begin position="511"/>
        <end position="516"/>
    </location>
</feature>
<gene>
    <name type="primary">kamD</name>
    <name type="ordered locus">CLOST_1379</name>
</gene>
<organism>
    <name type="scientific">Acetoanaerobium sticklandii (strain ATCC 12662 / DSM 519 / JCM 1433 / CCUG 9281 / NCIMB 10654 / HF)</name>
    <name type="common">Clostridium sticklandii</name>
    <dbReference type="NCBI Taxonomy" id="499177"/>
    <lineage>
        <taxon>Bacteria</taxon>
        <taxon>Bacillati</taxon>
        <taxon>Bacillota</taxon>
        <taxon>Clostridia</taxon>
        <taxon>Peptostreptococcales</taxon>
        <taxon>Filifactoraceae</taxon>
        <taxon>Acetoanaerobium</taxon>
    </lineage>
</organism>
<keyword id="KW-0002">3D-structure</keyword>
<keyword id="KW-0846">Cobalamin</keyword>
<keyword id="KW-0170">Cobalt</keyword>
<keyword id="KW-0903">Direct protein sequencing</keyword>
<keyword id="KW-0413">Isomerase</keyword>
<keyword id="KW-0663">Pyridoxal phosphate</keyword>
<keyword id="KW-1185">Reference proteome</keyword>
<sequence>MISVESKLNLDFNLVEKARAKAKAIAIDTQEFIEKHTTVTVERAVCRLLGIDGVDTDEVPLPNIVVDHIKENNGLNLGAAMYIANAVLNTGKTPQEIAQAISAGELDLTKLPMKDLFEVKTKALSMAKETVEKIKNNRSIRESRFEEYGDKSGPLLYVIVATGNIYEDITQAVAAAKQGADVIAVIRTTGQSLLDYVPYGATTEGFGGTYATQENFRLMREALDKVGAEVGKYIRLCNYCSGLCMPEIAAMGAIERLDVMLNDALYGILFRDINMQRTMIDQNFSRIINGFAGVIINTGEDNYLTTADAFEEAHTVLASQFINEQFALLAGLPEEQMGLGHAFEMDPELKNGFLYELSQAQMAREIFPKAPLKYMPPTKFMTGNIFKGHIQDALFNMVTIMTNQRIHLLGMLTEALHTPFMSDRALSIENAQYIFNNMESISEEIQFKEDGLIQKRAGFVLEKANELLEEIEQLGLFDTLEKGIFGGVKRPKDGGKGLNGVVSKDENYYNPFVELMLNK</sequence>
<protein>
    <recommendedName>
        <fullName evidence="7">Lysine 5,6-aminomutase alpha subunit</fullName>
        <shortName evidence="5 6">5,6-LAM</shortName>
        <ecNumber evidence="2 3">5.4.3.3</ecNumber>
    </recommendedName>
    <alternativeName>
        <fullName evidence="8">D-lysine 5,6-aminomutase alpha subunit</fullName>
    </alternativeName>
    <alternativeName>
        <fullName evidence="7">L-beta-lysine 5,6-aminomutase alpha subunit</fullName>
    </alternativeName>
</protein>
<name>KAMD_ACESD</name>
<accession>E3PRJ5</accession>
<accession>Q9ZFE6</accession>
<comment type="function">
    <text evidence="2 3">Catalyzes the migration of the L-beta-lysine and D-lysine epsilon amino group to the delta carbon to produce 3,5-diaminohexanoate and 2,5-diaminohexanoate, respectively.</text>
</comment>
<comment type="catalytic activity">
    <reaction evidence="3">
        <text>(3S)-3,6-diaminohexanoate = (3S,5S)-3,5-diaminohexanoate</text>
        <dbReference type="Rhea" id="RHEA:21736"/>
        <dbReference type="ChEBI" id="CHEBI:57434"/>
        <dbReference type="ChEBI" id="CHEBI:57436"/>
        <dbReference type="EC" id="5.4.3.3"/>
    </reaction>
</comment>
<comment type="catalytic activity">
    <reaction evidence="2 3">
        <text>D-lysine = (2R,5S)-2,5-diaminohexanoate</text>
        <dbReference type="Rhea" id="RHEA:18241"/>
        <dbReference type="ChEBI" id="CHEBI:32557"/>
        <dbReference type="ChEBI" id="CHEBI:137487"/>
        <dbReference type="EC" id="5.4.3.3"/>
    </reaction>
</comment>
<comment type="cofactor">
    <cofactor evidence="2 3">
        <name>adenosylcob(III)alamin</name>
        <dbReference type="ChEBI" id="CHEBI:18408"/>
    </cofactor>
</comment>
<comment type="cofactor">
    <cofactor evidence="3 4">
        <name>pyridoxal 5'-phosphate</name>
        <dbReference type="ChEBI" id="CHEBI:597326"/>
    </cofactor>
</comment>
<comment type="activity regulation">
    <text evidence="2">Rapidly inactivated in the presence of D-lysine and to a lesser extent in the absence of adenosylcobalamin (Adocbl). Activity is stable in the presence of Adocbl when D-lysine is absent. Adocbl imparts thermal stability at 37 degrees Celsius.</text>
</comment>
<comment type="biophysicochemical properties">
    <kinetics>
        <KM evidence="2">6.6 uM for adenosylcobalamin (for recombinant alpha and beta subunits expressed together in E.coli to overcome the presence of corrinoids in native system)</KM>
    </kinetics>
</comment>
<comment type="pathway">
    <text evidence="2">Amino-acid metabolism; lysine degradation.</text>
</comment>
<comment type="subunit">
    <text evidence="4">Heterotetramer of 2 alpha and 2 beta subunits.</text>
</comment>
<comment type="similarity">
    <text evidence="1">Belongs to the KamD family.</text>
</comment>
<comment type="sequence caution" evidence="7">
    <conflict type="erroneous initiation">
        <sequence resource="EMBL-CDS" id="CBH21499"/>
    </conflict>
    <text>Truncated N-terminus.</text>
</comment>